<name>CATNT_DEIRA</name>
<keyword id="KW-0460">Magnesium</keyword>
<keyword id="KW-0479">Metal-binding</keyword>
<keyword id="KW-0547">Nucleotide-binding</keyword>
<keyword id="KW-0548">Nucleotidyltransferase</keyword>
<keyword id="KW-1185">Reference proteome</keyword>
<keyword id="KW-0694">RNA-binding</keyword>
<keyword id="KW-0808">Transferase</keyword>
<keyword id="KW-0819">tRNA processing</keyword>
<keyword id="KW-0820">tRNA-binding</keyword>
<evidence type="ECO:0000250" key="1">
    <source>
        <dbReference type="UniProtKB" id="O67911"/>
    </source>
</evidence>
<evidence type="ECO:0000269" key="2">
    <source>
    </source>
</evidence>
<evidence type="ECO:0000303" key="3">
    <source>
    </source>
</evidence>
<evidence type="ECO:0000305" key="4"/>
<evidence type="ECO:0000312" key="5">
    <source>
        <dbReference type="EMBL" id="AAF10560.1"/>
    </source>
</evidence>
<sequence>MATPDGEQVWAQLQPQDRAWLNDLSRRAGPDTELALVGGAVRDALLGQTPLDLDIVVAGQDGQGVEALALASGLPFVFHPAFENATLTLPDGRGADLVRARREHYPQPGRNPEPLPGTLHDDLRRRDFGLNALALRLREDGAPELLDVVGGLRDLERRELRPLHDRSLHEDASRLVRAARLAARLELHPAPELLAQVPDALALADDTPRLWAELKLLLAEPRPGQAARVLDGWGAGTLLPGLPLLEALDVQQNAGTPVQPGTYAAAVLSAAPDAAALAERMALGERPAALLARALSDSYFAPGTPELQLRGLLRPESYLPLTGREVVALGVAPGPAVGRALAHLAGLRQSGAVRSADEERTALRAYLGANPKAT</sequence>
<feature type="chain" id="PRO_0000447569" description="CC-adding tRNA nucleotidyltransferase">
    <location>
        <begin position="1"/>
        <end position="374"/>
    </location>
</feature>
<feature type="binding site" evidence="1">
    <location>
        <begin position="39"/>
        <end position="42"/>
    </location>
    <ligand>
        <name>CTP</name>
        <dbReference type="ChEBI" id="CHEBI:37563"/>
    </ligand>
</feature>
<feature type="binding site" evidence="1">
    <location>
        <position position="52"/>
    </location>
    <ligand>
        <name>Mg(2+)</name>
        <dbReference type="ChEBI" id="CHEBI:18420"/>
    </ligand>
</feature>
<feature type="binding site" evidence="1">
    <location>
        <position position="54"/>
    </location>
    <ligand>
        <name>Mg(2+)</name>
        <dbReference type="ChEBI" id="CHEBI:18420"/>
    </ligand>
</feature>
<feature type="binding site" evidence="1">
    <location>
        <begin position="126"/>
        <end position="127"/>
    </location>
    <ligand>
        <name>CTP</name>
        <dbReference type="ChEBI" id="CHEBI:37563"/>
    </ligand>
</feature>
<feature type="binding site" evidence="1">
    <location>
        <position position="131"/>
    </location>
    <ligand>
        <name>CTP</name>
        <dbReference type="ChEBI" id="CHEBI:37563"/>
    </ligand>
</feature>
<feature type="binding site" evidence="1">
    <location>
        <begin position="171"/>
        <end position="180"/>
    </location>
    <ligand>
        <name>CTP</name>
        <dbReference type="ChEBI" id="CHEBI:37563"/>
    </ligand>
</feature>
<feature type="binding site" evidence="1">
    <location>
        <position position="209"/>
    </location>
    <ligand>
        <name>CTP</name>
        <dbReference type="ChEBI" id="CHEBI:37563"/>
    </ligand>
</feature>
<accession>Q9RVP2</accession>
<dbReference type="EC" id="2.7.7.-" evidence="2"/>
<dbReference type="EMBL" id="AE000513">
    <property type="protein sequence ID" value="AAF10560.1"/>
    <property type="molecule type" value="Genomic_DNA"/>
</dbReference>
<dbReference type="PIR" id="B75453">
    <property type="entry name" value="B75453"/>
</dbReference>
<dbReference type="RefSeq" id="NP_294707.1">
    <property type="nucleotide sequence ID" value="NC_001263.1"/>
</dbReference>
<dbReference type="RefSeq" id="WP_010887626.1">
    <property type="nucleotide sequence ID" value="NC_001263.1"/>
</dbReference>
<dbReference type="SMR" id="Q9RVP2"/>
<dbReference type="STRING" id="243230.DR_0983"/>
<dbReference type="PaxDb" id="243230-DR_0983"/>
<dbReference type="EnsemblBacteria" id="AAF10560">
    <property type="protein sequence ID" value="AAF10560"/>
    <property type="gene ID" value="DR_0983"/>
</dbReference>
<dbReference type="GeneID" id="69517230"/>
<dbReference type="KEGG" id="dra:DR_0983"/>
<dbReference type="PATRIC" id="fig|243230.17.peg.1170"/>
<dbReference type="eggNOG" id="COG0617">
    <property type="taxonomic scope" value="Bacteria"/>
</dbReference>
<dbReference type="HOGENOM" id="CLU_015961_5_1_0"/>
<dbReference type="InParanoid" id="Q9RVP2"/>
<dbReference type="OrthoDB" id="9805698at2"/>
<dbReference type="Proteomes" id="UP000002524">
    <property type="component" value="Chromosome 1"/>
</dbReference>
<dbReference type="GO" id="GO:0052927">
    <property type="term" value="F:CC tRNA cytidylyltransferase activity"/>
    <property type="evidence" value="ECO:0007669"/>
    <property type="project" value="RHEA"/>
</dbReference>
<dbReference type="GO" id="GO:0046872">
    <property type="term" value="F:metal ion binding"/>
    <property type="evidence" value="ECO:0007669"/>
    <property type="project" value="UniProtKB-KW"/>
</dbReference>
<dbReference type="GO" id="GO:0000166">
    <property type="term" value="F:nucleotide binding"/>
    <property type="evidence" value="ECO:0007669"/>
    <property type="project" value="UniProtKB-KW"/>
</dbReference>
<dbReference type="GO" id="GO:0000049">
    <property type="term" value="F:tRNA binding"/>
    <property type="evidence" value="ECO:0007669"/>
    <property type="project" value="UniProtKB-KW"/>
</dbReference>
<dbReference type="GO" id="GO:0008033">
    <property type="term" value="P:tRNA processing"/>
    <property type="evidence" value="ECO:0007669"/>
    <property type="project" value="UniProtKB-KW"/>
</dbReference>
<dbReference type="CDD" id="cd05398">
    <property type="entry name" value="NT_ClassII-CCAase"/>
    <property type="match status" value="1"/>
</dbReference>
<dbReference type="Gene3D" id="3.30.460.10">
    <property type="entry name" value="Beta Polymerase, domain 2"/>
    <property type="match status" value="1"/>
</dbReference>
<dbReference type="Gene3D" id="1.10.3090.10">
    <property type="entry name" value="cca-adding enzyme, domain 2"/>
    <property type="match status" value="1"/>
</dbReference>
<dbReference type="InterPro" id="IPR043519">
    <property type="entry name" value="NT_sf"/>
</dbReference>
<dbReference type="InterPro" id="IPR002646">
    <property type="entry name" value="PolA_pol_head_dom"/>
</dbReference>
<dbReference type="InterPro" id="IPR052390">
    <property type="entry name" value="tRNA_nt/polyA_polymerase"/>
</dbReference>
<dbReference type="PANTHER" id="PTHR47788:SF1">
    <property type="entry name" value="A-ADDING TRNA NUCLEOTIDYLTRANSFERASE"/>
    <property type="match status" value="1"/>
</dbReference>
<dbReference type="PANTHER" id="PTHR47788">
    <property type="entry name" value="POLYA POLYMERASE"/>
    <property type="match status" value="1"/>
</dbReference>
<dbReference type="Pfam" id="PF01743">
    <property type="entry name" value="PolyA_pol"/>
    <property type="match status" value="1"/>
</dbReference>
<dbReference type="SUPFAM" id="SSF81301">
    <property type="entry name" value="Nucleotidyltransferase"/>
    <property type="match status" value="1"/>
</dbReference>
<dbReference type="SUPFAM" id="SSF81891">
    <property type="entry name" value="Poly A polymerase C-terminal region-like"/>
    <property type="match status" value="1"/>
</dbReference>
<comment type="function">
    <text evidence="2">tRNA nucleotidyltransferase involved in the synthesis of the tRNA CCA terminus. Adds the two cytidine residues to tRNA.</text>
</comment>
<comment type="catalytic activity">
    <reaction evidence="2">
        <text>a tRNA precursor + 2 CTP = a tRNA with a 3' CC end + 2 diphosphate</text>
        <dbReference type="Rhea" id="RHEA:60008"/>
        <dbReference type="Rhea" id="RHEA-COMP:10465"/>
        <dbReference type="Rhea" id="RHEA-COMP:15488"/>
        <dbReference type="ChEBI" id="CHEBI:33019"/>
        <dbReference type="ChEBI" id="CHEBI:37563"/>
        <dbReference type="ChEBI" id="CHEBI:74896"/>
        <dbReference type="ChEBI" id="CHEBI:83069"/>
    </reaction>
    <physiologicalReaction direction="left-to-right" evidence="2">
        <dbReference type="Rhea" id="RHEA:60009"/>
    </physiologicalReaction>
</comment>
<comment type="cofactor">
    <cofactor evidence="1">
        <name>Mg(2+)</name>
        <dbReference type="ChEBI" id="CHEBI:18420"/>
    </cofactor>
</comment>
<comment type="similarity">
    <text evidence="4">Belongs to the tRNA nucleotidyltransferase/poly(A) polymerase family.</text>
</comment>
<gene>
    <name evidence="5" type="ordered locus">DR_0983</name>
</gene>
<protein>
    <recommendedName>
        <fullName evidence="4">CC-adding tRNA nucleotidyltransferase</fullName>
        <shortName evidence="4">C-adding TNT</shortName>
        <ecNumber evidence="2">2.7.7.-</ecNumber>
    </recommendedName>
    <alternativeName>
        <fullName evidence="3">CC-adding enzyme</fullName>
    </alternativeName>
</protein>
<reference key="1">
    <citation type="journal article" date="1999" name="Science">
        <title>Genome sequence of the radioresistant bacterium Deinococcus radiodurans R1.</title>
        <authorList>
            <person name="White O."/>
            <person name="Eisen J.A."/>
            <person name="Heidelberg J.F."/>
            <person name="Hickey E.K."/>
            <person name="Peterson J.D."/>
            <person name="Dodson R.J."/>
            <person name="Haft D.H."/>
            <person name="Gwinn M.L."/>
            <person name="Nelson W.C."/>
            <person name="Richardson D.L."/>
            <person name="Moffat K.S."/>
            <person name="Qin H."/>
            <person name="Jiang L."/>
            <person name="Pamphile W."/>
            <person name="Crosby M."/>
            <person name="Shen M."/>
            <person name="Vamathevan J.J."/>
            <person name="Lam P."/>
            <person name="McDonald L.A."/>
            <person name="Utterback T.R."/>
            <person name="Zalewski C."/>
            <person name="Makarova K.S."/>
            <person name="Aravind L."/>
            <person name="Daly M.J."/>
            <person name="Minton K.W."/>
            <person name="Fleischmann R.D."/>
            <person name="Ketchum K.A."/>
            <person name="Nelson K.E."/>
            <person name="Salzberg S.L."/>
            <person name="Smith H.O."/>
            <person name="Venter J.C."/>
            <person name="Fraser C.M."/>
        </authorList>
    </citation>
    <scope>NUCLEOTIDE SEQUENCE [LARGE SCALE GENOMIC DNA]</scope>
    <source>
        <strain>ATCC 13939 / DSM 20539 / JCM 16871 / CCUG 27074 / LMG 4051 / NBRC 15346 / NCIMB 9279 / VKM B-1422 / R1</strain>
    </source>
</reference>
<reference key="2">
    <citation type="journal article" date="2002" name="J. Biol. Chem.">
        <title>Closely related CC- and A-adding enzymes collaborate to construct and repair the 3'-terminal CCA of tRNA in Synechocystis sp. and Deinococcus radiodurans.</title>
        <authorList>
            <person name="Tomita K."/>
            <person name="Weiner A.M."/>
        </authorList>
    </citation>
    <scope>FUNCTION</scope>
    <scope>CATALYTIC ACTIVITY</scope>
</reference>
<proteinExistence type="evidence at protein level"/>
<organism>
    <name type="scientific">Deinococcus radiodurans (strain ATCC 13939 / DSM 20539 / JCM 16871 / CCUG 27074 / LMG 4051 / NBRC 15346 / NCIMB 9279 / VKM B-1422 / R1)</name>
    <dbReference type="NCBI Taxonomy" id="243230"/>
    <lineage>
        <taxon>Bacteria</taxon>
        <taxon>Thermotogati</taxon>
        <taxon>Deinococcota</taxon>
        <taxon>Deinococci</taxon>
        <taxon>Deinococcales</taxon>
        <taxon>Deinococcaceae</taxon>
        <taxon>Deinococcus</taxon>
    </lineage>
</organism>